<evidence type="ECO:0000255" key="1">
    <source>
        <dbReference type="HAMAP-Rule" id="MF_00039"/>
    </source>
</evidence>
<name>KAD6_METBF</name>
<accession>Q46FV0</accession>
<protein>
    <recommendedName>
        <fullName evidence="1">Putative adenylate kinase</fullName>
        <shortName evidence="1">AK</shortName>
        <ecNumber evidence="1">2.7.4.3</ecNumber>
    </recommendedName>
    <alternativeName>
        <fullName evidence="1">ATP-AMP transphosphorylase</fullName>
    </alternativeName>
</protein>
<organism>
    <name type="scientific">Methanosarcina barkeri (strain Fusaro / DSM 804)</name>
    <dbReference type="NCBI Taxonomy" id="269797"/>
    <lineage>
        <taxon>Archaea</taxon>
        <taxon>Methanobacteriati</taxon>
        <taxon>Methanobacteriota</taxon>
        <taxon>Stenosarchaea group</taxon>
        <taxon>Methanomicrobia</taxon>
        <taxon>Methanosarcinales</taxon>
        <taxon>Methanosarcinaceae</taxon>
        <taxon>Methanosarcina</taxon>
    </lineage>
</organism>
<comment type="function">
    <text evidence="1">Broad-specificity nucleoside monophosphate (NMP) kinase that catalyzes the reversible transfer of the terminal phosphate group between nucleoside triphosphates and monophosphates. Also has ATPase activity. Involved in the late maturation steps of the 30S ribosomal particles, specifically 16S rRNA maturation. While NMP activity is not required for ribosome maturation, ATPase activity is. Associates transiently with small ribosomal subunit protein uS11. ATP hydrolysis breaks the interaction with uS11. May temporarily remove uS11 from the ribosome to enable a conformational change of the ribosomal RNA that is needed for the final maturation step of the small ribosomal subunit.</text>
</comment>
<comment type="catalytic activity">
    <reaction evidence="1">
        <text>AMP + ATP = 2 ADP</text>
        <dbReference type="Rhea" id="RHEA:12973"/>
        <dbReference type="ChEBI" id="CHEBI:30616"/>
        <dbReference type="ChEBI" id="CHEBI:456215"/>
        <dbReference type="ChEBI" id="CHEBI:456216"/>
        <dbReference type="EC" id="2.7.4.3"/>
    </reaction>
</comment>
<comment type="catalytic activity">
    <reaction evidence="1">
        <text>ATP + H2O = ADP + phosphate + H(+)</text>
        <dbReference type="Rhea" id="RHEA:13065"/>
        <dbReference type="ChEBI" id="CHEBI:15377"/>
        <dbReference type="ChEBI" id="CHEBI:15378"/>
        <dbReference type="ChEBI" id="CHEBI:30616"/>
        <dbReference type="ChEBI" id="CHEBI:43474"/>
        <dbReference type="ChEBI" id="CHEBI:456216"/>
    </reaction>
</comment>
<comment type="subunit">
    <text evidence="1">Interacts with uS11. Not a structural component of 40S pre-ribosomes, but transiently interacts with them by binding to uS11.</text>
</comment>
<comment type="similarity">
    <text evidence="1">Belongs to the adenylate kinase family. AK6 subfamily.</text>
</comment>
<sequence>MLIGLTGTPGTGKTSVSKFLERKRHWKVIHLNEMIKEEHLYTEVDEVRDAVIADMELVRQRLEEIIGGKENEVIILESHLAHYIADIVIILRVYPPELKMRLKARGYSEEKIRENIEAEALDVILVEAFEWCKKVFEINTTGKSIEETEQHIEKIIDHILSGNEEELPEYKPGSIDWIDLVP</sequence>
<reference key="1">
    <citation type="journal article" date="2006" name="J. Bacteriol.">
        <title>The Methanosarcina barkeri genome: comparative analysis with Methanosarcina acetivorans and Methanosarcina mazei reveals extensive rearrangement within methanosarcinal genomes.</title>
        <authorList>
            <person name="Maeder D.L."/>
            <person name="Anderson I."/>
            <person name="Brettin T.S."/>
            <person name="Bruce D.C."/>
            <person name="Gilna P."/>
            <person name="Han C.S."/>
            <person name="Lapidus A."/>
            <person name="Metcalf W.W."/>
            <person name="Saunders E."/>
            <person name="Tapia R."/>
            <person name="Sowers K.R."/>
        </authorList>
    </citation>
    <scope>NUCLEOTIDE SEQUENCE [LARGE SCALE GENOMIC DNA]</scope>
    <source>
        <strain>Fusaro / DSM 804</strain>
    </source>
</reference>
<dbReference type="EC" id="2.7.4.3" evidence="1"/>
<dbReference type="EMBL" id="CP000099">
    <property type="protein sequence ID" value="AAZ69242.1"/>
    <property type="molecule type" value="Genomic_DNA"/>
</dbReference>
<dbReference type="SMR" id="Q46FV0"/>
<dbReference type="STRING" id="269797.Mbar_A0258"/>
<dbReference type="PaxDb" id="269797-Mbar_A0258"/>
<dbReference type="KEGG" id="mba:Mbar_A0258"/>
<dbReference type="eggNOG" id="arCOG01038">
    <property type="taxonomic scope" value="Archaea"/>
</dbReference>
<dbReference type="HOGENOM" id="CLU_079096_0_1_2"/>
<dbReference type="OrthoDB" id="8730at2157"/>
<dbReference type="GO" id="GO:0004017">
    <property type="term" value="F:adenylate kinase activity"/>
    <property type="evidence" value="ECO:0007669"/>
    <property type="project" value="UniProtKB-UniRule"/>
</dbReference>
<dbReference type="GO" id="GO:0005524">
    <property type="term" value="F:ATP binding"/>
    <property type="evidence" value="ECO:0007669"/>
    <property type="project" value="UniProtKB-UniRule"/>
</dbReference>
<dbReference type="GO" id="GO:0016887">
    <property type="term" value="F:ATP hydrolysis activity"/>
    <property type="evidence" value="ECO:0007669"/>
    <property type="project" value="InterPro"/>
</dbReference>
<dbReference type="GO" id="GO:0042274">
    <property type="term" value="P:ribosomal small subunit biogenesis"/>
    <property type="evidence" value="ECO:0007669"/>
    <property type="project" value="UniProtKB-UniRule"/>
</dbReference>
<dbReference type="GO" id="GO:0006364">
    <property type="term" value="P:rRNA processing"/>
    <property type="evidence" value="ECO:0007669"/>
    <property type="project" value="UniProtKB-KW"/>
</dbReference>
<dbReference type="Gene3D" id="3.40.50.300">
    <property type="entry name" value="P-loop containing nucleotide triphosphate hydrolases"/>
    <property type="match status" value="1"/>
</dbReference>
<dbReference type="HAMAP" id="MF_00039">
    <property type="entry name" value="Adenylate_kinase_AK6"/>
    <property type="match status" value="1"/>
</dbReference>
<dbReference type="InterPro" id="IPR020618">
    <property type="entry name" value="Adenyl_kinase_AK6"/>
</dbReference>
<dbReference type="InterPro" id="IPR027417">
    <property type="entry name" value="P-loop_NTPase"/>
</dbReference>
<dbReference type="PANTHER" id="PTHR12595:SF0">
    <property type="entry name" value="ADENYLATE KINASE ISOENZYME 6"/>
    <property type="match status" value="1"/>
</dbReference>
<dbReference type="PANTHER" id="PTHR12595">
    <property type="entry name" value="POS9-ACTIVATING FACTOR FAP7-RELATED"/>
    <property type="match status" value="1"/>
</dbReference>
<dbReference type="Pfam" id="PF13238">
    <property type="entry name" value="AAA_18"/>
    <property type="match status" value="1"/>
</dbReference>
<dbReference type="SUPFAM" id="SSF52540">
    <property type="entry name" value="P-loop containing nucleoside triphosphate hydrolases"/>
    <property type="match status" value="1"/>
</dbReference>
<feature type="chain" id="PRO_1000003091" description="Putative adenylate kinase">
    <location>
        <begin position="1"/>
        <end position="182"/>
    </location>
</feature>
<feature type="region of interest" description="NMP" evidence="1">
    <location>
        <begin position="30"/>
        <end position="53"/>
    </location>
</feature>
<feature type="region of interest" description="LID" evidence="1">
    <location>
        <begin position="104"/>
        <end position="114"/>
    </location>
</feature>
<feature type="binding site" evidence="1">
    <location>
        <position position="10"/>
    </location>
    <ligand>
        <name>ATP</name>
        <dbReference type="ChEBI" id="CHEBI:30616"/>
    </ligand>
</feature>
<feature type="binding site" evidence="1">
    <location>
        <position position="12"/>
    </location>
    <ligand>
        <name>ATP</name>
        <dbReference type="ChEBI" id="CHEBI:30616"/>
    </ligand>
</feature>
<feature type="binding site" evidence="1">
    <location>
        <position position="13"/>
    </location>
    <ligand>
        <name>ATP</name>
        <dbReference type="ChEBI" id="CHEBI:30616"/>
    </ligand>
</feature>
<feature type="binding site" evidence="1">
    <location>
        <position position="14"/>
    </location>
    <ligand>
        <name>ATP</name>
        <dbReference type="ChEBI" id="CHEBI:30616"/>
    </ligand>
</feature>
<feature type="binding site" evidence="1">
    <location>
        <position position="15"/>
    </location>
    <ligand>
        <name>ATP</name>
        <dbReference type="ChEBI" id="CHEBI:30616"/>
    </ligand>
</feature>
<feature type="binding site" evidence="1">
    <location>
        <position position="105"/>
    </location>
    <ligand>
        <name>ATP</name>
        <dbReference type="ChEBI" id="CHEBI:30616"/>
    </ligand>
</feature>
<feature type="binding site" evidence="1">
    <location>
        <position position="143"/>
    </location>
    <ligand>
        <name>ATP</name>
        <dbReference type="ChEBI" id="CHEBI:30616"/>
    </ligand>
</feature>
<keyword id="KW-0067">ATP-binding</keyword>
<keyword id="KW-0418">Kinase</keyword>
<keyword id="KW-0547">Nucleotide-binding</keyword>
<keyword id="KW-0690">Ribosome biogenesis</keyword>
<keyword id="KW-0698">rRNA processing</keyword>
<keyword id="KW-0808">Transferase</keyword>
<proteinExistence type="inferred from homology"/>
<gene>
    <name type="ordered locus">Mbar_A0258</name>
</gene>